<name>PSTB_HELMO</name>
<reference key="1">
    <citation type="journal article" date="2002" name="Science">
        <title>Whole-genome analysis of photosynthetic prokaryotes.</title>
        <authorList>
            <person name="Raymond J."/>
            <person name="Zhaxybayeva O."/>
            <person name="Gogarten J.P."/>
            <person name="Gerdes S.Y."/>
            <person name="Blankenship R.E."/>
        </authorList>
    </citation>
    <scope>NUCLEOTIDE SEQUENCE [GENOMIC DNA]</scope>
</reference>
<organism>
    <name type="scientific">Heliobacterium mobile</name>
    <name type="common">Heliobacillus mobilis</name>
    <dbReference type="NCBI Taxonomy" id="28064"/>
    <lineage>
        <taxon>Bacteria</taxon>
        <taxon>Bacillati</taxon>
        <taxon>Bacillota</taxon>
        <taxon>Clostridia</taxon>
        <taxon>Eubacteriales</taxon>
        <taxon>Heliobacteriaceae</taxon>
        <taxon>Heliobacterium</taxon>
    </lineage>
</organism>
<keyword id="KW-0067">ATP-binding</keyword>
<keyword id="KW-1003">Cell membrane</keyword>
<keyword id="KW-0472">Membrane</keyword>
<keyword id="KW-0547">Nucleotide-binding</keyword>
<keyword id="KW-0592">Phosphate transport</keyword>
<keyword id="KW-1278">Translocase</keyword>
<keyword id="KW-0813">Transport</keyword>
<sequence>MIRTKISAENLNLFYGDFHALKDINISMGERQVTALIGPSGCGKSTFLRCLNRMNDIIPTCRVQGKLMFEDSEIYHPDTDVVALRKRVGMVFQAPNPFPKSVYENVAYAPKLHGLKDKARLDEIVETSLRQAALWDEVKDRLHKPALGLSGGQQQRLCIARALAIQPEVLLMDEPTSALDPISTLKIEELIRELKQYYTIVIVTHNMQQAARISDKTAFFLVGDLVEFDDTEVIFTNPKDQRTEDYITGRFG</sequence>
<dbReference type="EC" id="7.3.2.1" evidence="1"/>
<dbReference type="EMBL" id="AY142868">
    <property type="protein sequence ID" value="AAN87472.1"/>
    <property type="molecule type" value="Genomic_DNA"/>
</dbReference>
<dbReference type="RefSeq" id="WP_155474697.1">
    <property type="nucleotide sequence ID" value="NZ_WNKU01000001.1"/>
</dbReference>
<dbReference type="SMR" id="Q8GDV4"/>
<dbReference type="OrthoDB" id="9804199at2"/>
<dbReference type="GO" id="GO:0005886">
    <property type="term" value="C:plasma membrane"/>
    <property type="evidence" value="ECO:0007669"/>
    <property type="project" value="UniProtKB-SubCell"/>
</dbReference>
<dbReference type="GO" id="GO:0005524">
    <property type="term" value="F:ATP binding"/>
    <property type="evidence" value="ECO:0007669"/>
    <property type="project" value="UniProtKB-KW"/>
</dbReference>
<dbReference type="GO" id="GO:0016887">
    <property type="term" value="F:ATP hydrolysis activity"/>
    <property type="evidence" value="ECO:0007669"/>
    <property type="project" value="InterPro"/>
</dbReference>
<dbReference type="GO" id="GO:0015415">
    <property type="term" value="F:ATPase-coupled phosphate ion transmembrane transporter activity"/>
    <property type="evidence" value="ECO:0007669"/>
    <property type="project" value="UniProtKB-EC"/>
</dbReference>
<dbReference type="GO" id="GO:0035435">
    <property type="term" value="P:phosphate ion transmembrane transport"/>
    <property type="evidence" value="ECO:0007669"/>
    <property type="project" value="InterPro"/>
</dbReference>
<dbReference type="CDD" id="cd03260">
    <property type="entry name" value="ABC_PstB_phosphate_transporter"/>
    <property type="match status" value="1"/>
</dbReference>
<dbReference type="FunFam" id="3.40.50.300:FF:000132">
    <property type="entry name" value="Phosphate import ATP-binding protein PstB"/>
    <property type="match status" value="1"/>
</dbReference>
<dbReference type="Gene3D" id="3.40.50.300">
    <property type="entry name" value="P-loop containing nucleotide triphosphate hydrolases"/>
    <property type="match status" value="1"/>
</dbReference>
<dbReference type="InterPro" id="IPR003593">
    <property type="entry name" value="AAA+_ATPase"/>
</dbReference>
<dbReference type="InterPro" id="IPR003439">
    <property type="entry name" value="ABC_transporter-like_ATP-bd"/>
</dbReference>
<dbReference type="InterPro" id="IPR017871">
    <property type="entry name" value="ABC_transporter-like_CS"/>
</dbReference>
<dbReference type="InterPro" id="IPR027417">
    <property type="entry name" value="P-loop_NTPase"/>
</dbReference>
<dbReference type="InterPro" id="IPR005670">
    <property type="entry name" value="PstB-like"/>
</dbReference>
<dbReference type="NCBIfam" id="TIGR00972">
    <property type="entry name" value="3a0107s01c2"/>
    <property type="match status" value="1"/>
</dbReference>
<dbReference type="PANTHER" id="PTHR43423">
    <property type="entry name" value="ABC TRANSPORTER I FAMILY MEMBER 17"/>
    <property type="match status" value="1"/>
</dbReference>
<dbReference type="PANTHER" id="PTHR43423:SF1">
    <property type="entry name" value="ABC TRANSPORTER I FAMILY MEMBER 17"/>
    <property type="match status" value="1"/>
</dbReference>
<dbReference type="Pfam" id="PF00005">
    <property type="entry name" value="ABC_tran"/>
    <property type="match status" value="1"/>
</dbReference>
<dbReference type="SMART" id="SM00382">
    <property type="entry name" value="AAA"/>
    <property type="match status" value="1"/>
</dbReference>
<dbReference type="SUPFAM" id="SSF52540">
    <property type="entry name" value="P-loop containing nucleoside triphosphate hydrolases"/>
    <property type="match status" value="1"/>
</dbReference>
<dbReference type="PROSITE" id="PS00211">
    <property type="entry name" value="ABC_TRANSPORTER_1"/>
    <property type="match status" value="1"/>
</dbReference>
<dbReference type="PROSITE" id="PS50893">
    <property type="entry name" value="ABC_TRANSPORTER_2"/>
    <property type="match status" value="1"/>
</dbReference>
<dbReference type="PROSITE" id="PS51238">
    <property type="entry name" value="PSTB"/>
    <property type="match status" value="1"/>
</dbReference>
<gene>
    <name evidence="1" type="primary">pstB</name>
</gene>
<accession>Q8GDV4</accession>
<protein>
    <recommendedName>
        <fullName evidence="1">Phosphate import ATP-binding protein PstB</fullName>
        <ecNumber evidence="1">7.3.2.1</ecNumber>
    </recommendedName>
    <alternativeName>
        <fullName evidence="1">ABC phosphate transporter</fullName>
    </alternativeName>
    <alternativeName>
        <fullName evidence="1">Phosphate-transporting ATPase</fullName>
    </alternativeName>
</protein>
<feature type="chain" id="PRO_0000092822" description="Phosphate import ATP-binding protein PstB">
    <location>
        <begin position="1"/>
        <end position="252" status="greater than"/>
    </location>
</feature>
<feature type="domain" description="ABC transporter" evidence="1">
    <location>
        <begin position="6"/>
        <end position="247"/>
    </location>
</feature>
<feature type="binding site" evidence="1">
    <location>
        <begin position="38"/>
        <end position="45"/>
    </location>
    <ligand>
        <name>ATP</name>
        <dbReference type="ChEBI" id="CHEBI:30616"/>
    </ligand>
</feature>
<feature type="non-terminal residue">
    <location>
        <position position="252"/>
    </location>
</feature>
<evidence type="ECO:0000255" key="1">
    <source>
        <dbReference type="HAMAP-Rule" id="MF_01702"/>
    </source>
</evidence>
<proteinExistence type="inferred from homology"/>
<comment type="function">
    <text evidence="1">Part of the ABC transporter complex PstSACB involved in phosphate import. Responsible for energy coupling to the transport system.</text>
</comment>
<comment type="catalytic activity">
    <reaction evidence="1">
        <text>phosphate(out) + ATP + H2O = ADP + 2 phosphate(in) + H(+)</text>
        <dbReference type="Rhea" id="RHEA:24440"/>
        <dbReference type="ChEBI" id="CHEBI:15377"/>
        <dbReference type="ChEBI" id="CHEBI:15378"/>
        <dbReference type="ChEBI" id="CHEBI:30616"/>
        <dbReference type="ChEBI" id="CHEBI:43474"/>
        <dbReference type="ChEBI" id="CHEBI:456216"/>
        <dbReference type="EC" id="7.3.2.1"/>
    </reaction>
</comment>
<comment type="subunit">
    <text evidence="1">The complex is composed of two ATP-binding proteins (PstB), two transmembrane proteins (PstC and PstA) and a solute-binding protein (PstS).</text>
</comment>
<comment type="subcellular location">
    <subcellularLocation>
        <location evidence="1">Cell membrane</location>
        <topology evidence="1">Peripheral membrane protein</topology>
    </subcellularLocation>
</comment>
<comment type="similarity">
    <text evidence="1">Belongs to the ABC transporter superfamily. Phosphate importer (TC 3.A.1.7) family.</text>
</comment>